<reference key="1">
    <citation type="journal article" date="2005" name="J. Bacteriol.">
        <title>Insights on evolution of virulence and resistance from the complete genome analysis of an early methicillin-resistant Staphylococcus aureus strain and a biofilm-producing methicillin-resistant Staphylococcus epidermidis strain.</title>
        <authorList>
            <person name="Gill S.R."/>
            <person name="Fouts D.E."/>
            <person name="Archer G.L."/>
            <person name="Mongodin E.F."/>
            <person name="DeBoy R.T."/>
            <person name="Ravel J."/>
            <person name="Paulsen I.T."/>
            <person name="Kolonay J.F."/>
            <person name="Brinkac L.M."/>
            <person name="Beanan M.J."/>
            <person name="Dodson R.J."/>
            <person name="Daugherty S.C."/>
            <person name="Madupu R."/>
            <person name="Angiuoli S.V."/>
            <person name="Durkin A.S."/>
            <person name="Haft D.H."/>
            <person name="Vamathevan J.J."/>
            <person name="Khouri H."/>
            <person name="Utterback T.R."/>
            <person name="Lee C."/>
            <person name="Dimitrov G."/>
            <person name="Jiang L."/>
            <person name="Qin H."/>
            <person name="Weidman J."/>
            <person name="Tran K."/>
            <person name="Kang K.H."/>
            <person name="Hance I.R."/>
            <person name="Nelson K.E."/>
            <person name="Fraser C.M."/>
        </authorList>
    </citation>
    <scope>NUCLEOTIDE SEQUENCE [LARGE SCALE GENOMIC DNA]</scope>
    <source>
        <strain>COL</strain>
    </source>
</reference>
<keyword id="KW-0066">ATP synthesis</keyword>
<keyword id="KW-1003">Cell membrane</keyword>
<keyword id="KW-0139">CF(1)</keyword>
<keyword id="KW-0375">Hydrogen ion transport</keyword>
<keyword id="KW-0406">Ion transport</keyword>
<keyword id="KW-0472">Membrane</keyword>
<keyword id="KW-0813">Transport</keyword>
<proteinExistence type="inferred from homology"/>
<dbReference type="EMBL" id="CP000046">
    <property type="protein sequence ID" value="AAW38408.1"/>
    <property type="molecule type" value="Genomic_DNA"/>
</dbReference>
<dbReference type="RefSeq" id="WP_000241351.1">
    <property type="nucleotide sequence ID" value="NZ_JBGOFO010000007.1"/>
</dbReference>
<dbReference type="SMR" id="Q5HE94"/>
<dbReference type="KEGG" id="sac:SACOL2098"/>
<dbReference type="HOGENOM" id="CLU_085114_4_1_9"/>
<dbReference type="Proteomes" id="UP000000530">
    <property type="component" value="Chromosome"/>
</dbReference>
<dbReference type="GO" id="GO:0005886">
    <property type="term" value="C:plasma membrane"/>
    <property type="evidence" value="ECO:0007669"/>
    <property type="project" value="UniProtKB-SubCell"/>
</dbReference>
<dbReference type="GO" id="GO:0045259">
    <property type="term" value="C:proton-transporting ATP synthase complex"/>
    <property type="evidence" value="ECO:0007669"/>
    <property type="project" value="UniProtKB-KW"/>
</dbReference>
<dbReference type="GO" id="GO:0046933">
    <property type="term" value="F:proton-transporting ATP synthase activity, rotational mechanism"/>
    <property type="evidence" value="ECO:0007669"/>
    <property type="project" value="UniProtKB-UniRule"/>
</dbReference>
<dbReference type="Gene3D" id="1.10.520.20">
    <property type="entry name" value="N-terminal domain of the delta subunit of the F1F0-ATP synthase"/>
    <property type="match status" value="1"/>
</dbReference>
<dbReference type="HAMAP" id="MF_01416">
    <property type="entry name" value="ATP_synth_delta_bact"/>
    <property type="match status" value="1"/>
</dbReference>
<dbReference type="InterPro" id="IPR026015">
    <property type="entry name" value="ATP_synth_OSCP/delta_N_sf"/>
</dbReference>
<dbReference type="InterPro" id="IPR020781">
    <property type="entry name" value="ATPase_OSCP/d_CS"/>
</dbReference>
<dbReference type="InterPro" id="IPR000711">
    <property type="entry name" value="ATPase_OSCP/dsu"/>
</dbReference>
<dbReference type="NCBIfam" id="TIGR01145">
    <property type="entry name" value="ATP_synt_delta"/>
    <property type="match status" value="1"/>
</dbReference>
<dbReference type="NCBIfam" id="NF004399">
    <property type="entry name" value="PRK05758.1-1"/>
    <property type="match status" value="1"/>
</dbReference>
<dbReference type="PANTHER" id="PTHR11910">
    <property type="entry name" value="ATP SYNTHASE DELTA CHAIN"/>
    <property type="match status" value="1"/>
</dbReference>
<dbReference type="Pfam" id="PF00213">
    <property type="entry name" value="OSCP"/>
    <property type="match status" value="1"/>
</dbReference>
<dbReference type="PRINTS" id="PR00125">
    <property type="entry name" value="ATPASEDELTA"/>
</dbReference>
<dbReference type="SUPFAM" id="SSF47928">
    <property type="entry name" value="N-terminal domain of the delta subunit of the F1F0-ATP synthase"/>
    <property type="match status" value="1"/>
</dbReference>
<dbReference type="PROSITE" id="PS00389">
    <property type="entry name" value="ATPASE_DELTA"/>
    <property type="match status" value="1"/>
</dbReference>
<gene>
    <name evidence="1" type="primary">atpH</name>
    <name type="ordered locus">SACOL2098</name>
</gene>
<feature type="chain" id="PRO_0000193480" description="ATP synthase subunit delta">
    <location>
        <begin position="1"/>
        <end position="179"/>
    </location>
</feature>
<organism>
    <name type="scientific">Staphylococcus aureus (strain COL)</name>
    <dbReference type="NCBI Taxonomy" id="93062"/>
    <lineage>
        <taxon>Bacteria</taxon>
        <taxon>Bacillati</taxon>
        <taxon>Bacillota</taxon>
        <taxon>Bacilli</taxon>
        <taxon>Bacillales</taxon>
        <taxon>Staphylococcaceae</taxon>
        <taxon>Staphylococcus</taxon>
    </lineage>
</organism>
<accession>Q5HE94</accession>
<comment type="function">
    <text evidence="1">F(1)F(0) ATP synthase produces ATP from ADP in the presence of a proton or sodium gradient. F-type ATPases consist of two structural domains, F(1) containing the extramembraneous catalytic core and F(0) containing the membrane proton channel, linked together by a central stalk and a peripheral stalk. During catalysis, ATP synthesis in the catalytic domain of F(1) is coupled via a rotary mechanism of the central stalk subunits to proton translocation.</text>
</comment>
<comment type="function">
    <text evidence="1">This protein is part of the stalk that links CF(0) to CF(1). It either transmits conformational changes from CF(0) to CF(1) or is implicated in proton conduction.</text>
</comment>
<comment type="subunit">
    <text evidence="1">F-type ATPases have 2 components, F(1) - the catalytic core - and F(0) - the membrane proton channel. F(1) has five subunits: alpha(3), beta(3), gamma(1), delta(1), epsilon(1). F(0) has three main subunits: a(1), b(2) and c(10-14). The alpha and beta chains form an alternating ring which encloses part of the gamma chain. F(1) is attached to F(0) by a central stalk formed by the gamma and epsilon chains, while a peripheral stalk is formed by the delta and b chains.</text>
</comment>
<comment type="subcellular location">
    <subcellularLocation>
        <location evidence="1">Cell membrane</location>
        <topology evidence="1">Peripheral membrane protein</topology>
    </subcellularLocation>
</comment>
<comment type="similarity">
    <text evidence="1">Belongs to the ATPase delta chain family.</text>
</comment>
<name>ATPD_STAAC</name>
<evidence type="ECO:0000255" key="1">
    <source>
        <dbReference type="HAMAP-Rule" id="MF_01416"/>
    </source>
</evidence>
<protein>
    <recommendedName>
        <fullName evidence="1">ATP synthase subunit delta</fullName>
    </recommendedName>
    <alternativeName>
        <fullName evidence="1">ATP synthase F(1) sector subunit delta</fullName>
    </alternativeName>
    <alternativeName>
        <fullName evidence="1">F-type ATPase subunit delta</fullName>
        <shortName evidence="1">F-ATPase subunit delta</shortName>
    </alternativeName>
</protein>
<sequence>MVKVANKYAKALFDVSLDTNNLETINEELTVINEAVKDKIEQLRMVDSNPTQTAEQRRELINGVFTDINPYIKNMMYVLADNRHISLIADVFKAFQSLYNGHYNQDFATIESTYELSQEELDKIVKLVTQQTKLSKVIVDTKINPDLIGGFRVKVGTTVLDGSVRNDLVQLQRKFRRVN</sequence>